<gene>
    <name type="primary">nkain4</name>
</gene>
<keyword id="KW-1003">Cell membrane</keyword>
<keyword id="KW-0472">Membrane</keyword>
<keyword id="KW-1185">Reference proteome</keyword>
<keyword id="KW-0812">Transmembrane</keyword>
<keyword id="KW-1133">Transmembrane helix</keyword>
<comment type="subunit">
    <text evidence="1">Interacts with atp1b1 C-terminus.</text>
</comment>
<comment type="subcellular location">
    <subcellularLocation>
        <location evidence="3">Cell membrane</location>
        <topology evidence="3">Multi-pass membrane protein</topology>
    </subcellularLocation>
</comment>
<comment type="similarity">
    <text evidence="3">Belongs to the NKAIN family.</text>
</comment>
<feature type="chain" id="PRO_0000310472" description="Sodium/potassium-transporting ATPase subunit beta-1-interacting protein 4">
    <location>
        <begin position="1"/>
        <end position="208"/>
    </location>
</feature>
<feature type="transmembrane region" description="Helical" evidence="2">
    <location>
        <begin position="10"/>
        <end position="30"/>
    </location>
</feature>
<feature type="transmembrane region" description="Helical" evidence="2">
    <location>
        <begin position="35"/>
        <end position="55"/>
    </location>
</feature>
<feature type="transmembrane region" description="Helical" evidence="2">
    <location>
        <begin position="62"/>
        <end position="82"/>
    </location>
</feature>
<feature type="transmembrane region" description="Helical" evidence="2">
    <location>
        <begin position="151"/>
        <end position="171"/>
    </location>
</feature>
<protein>
    <recommendedName>
        <fullName>Sodium/potassium-transporting ATPase subunit beta-1-interacting protein 4</fullName>
        <shortName>Na(+)/K(+)-transporting ATPase subunit beta-1-interacting protein 4</shortName>
    </recommendedName>
</protein>
<proteinExistence type="evidence at transcript level"/>
<reference key="1">
    <citation type="submission" date="2004-07" db="EMBL/GenBank/DDBJ databases">
        <authorList>
            <consortium name="NIH - Xenopus Gene Collection (XGC) project"/>
        </authorList>
    </citation>
    <scope>NUCLEOTIDE SEQUENCE [LARGE SCALE MRNA]</scope>
    <source>
        <tissue>Embryo</tissue>
    </source>
</reference>
<accession>Q6DEX3</accession>
<dbReference type="EMBL" id="BC076970">
    <property type="protein sequence ID" value="AAH76970.1"/>
    <property type="molecule type" value="mRNA"/>
</dbReference>
<dbReference type="RefSeq" id="NP_001005067.1">
    <property type="nucleotide sequence ID" value="NM_001005067.1"/>
</dbReference>
<dbReference type="SMR" id="Q6DEX3"/>
<dbReference type="FunCoup" id="Q6DEX3">
    <property type="interactions" value="15"/>
</dbReference>
<dbReference type="DNASU" id="448628"/>
<dbReference type="GeneID" id="448628"/>
<dbReference type="KEGG" id="xtr:448628"/>
<dbReference type="AGR" id="Xenbase:XB-GENE-6455573"/>
<dbReference type="CTD" id="128414"/>
<dbReference type="Xenbase" id="XB-GENE-6455573">
    <property type="gene designation" value="nkain4"/>
</dbReference>
<dbReference type="InParanoid" id="Q6DEX3"/>
<dbReference type="OMA" id="ETPMAGI"/>
<dbReference type="OrthoDB" id="10050321at2759"/>
<dbReference type="Proteomes" id="UP000008143">
    <property type="component" value="Chromosome 10"/>
</dbReference>
<dbReference type="GO" id="GO:0005886">
    <property type="term" value="C:plasma membrane"/>
    <property type="evidence" value="ECO:0007669"/>
    <property type="project" value="UniProtKB-SubCell"/>
</dbReference>
<dbReference type="InterPro" id="IPR008516">
    <property type="entry name" value="Na/K-Atpase_Interacting"/>
</dbReference>
<dbReference type="PANTHER" id="PTHR13084:SF5">
    <property type="entry name" value="SODIUM_POTASSIUM-TRANSPORTING ATPASE SUBUNIT BETA-1-INTERACTING PROTEIN 4"/>
    <property type="match status" value="1"/>
</dbReference>
<dbReference type="PANTHER" id="PTHR13084">
    <property type="entry name" value="T-CELL LYMPHOMA BREAKPOINT-ASSOCIATED TARGET 1-RELATED"/>
    <property type="match status" value="1"/>
</dbReference>
<dbReference type="Pfam" id="PF05640">
    <property type="entry name" value="NKAIN"/>
    <property type="match status" value="1"/>
</dbReference>
<sequence length="208" mass="23663">MACCTGRCTLILLCTLQLVAALERQVFDFLGYQWAPILANFLHIVATILGLFGTLQYRPRYVIAYALWAAVWVTWNVFLICFYLEVGDLNKESELLTFHVSQHQSWWSEHGPGCVRKEAPVAGVAELESHSYVSVIGCNVEYQYIEVMHSALQILLALLGFVYACYVTSVFTEEEDSFDFIGGFDPFPLYHVNEKSNHLLFKQSYLPA</sequence>
<organism>
    <name type="scientific">Xenopus tropicalis</name>
    <name type="common">Western clawed frog</name>
    <name type="synonym">Silurana tropicalis</name>
    <dbReference type="NCBI Taxonomy" id="8364"/>
    <lineage>
        <taxon>Eukaryota</taxon>
        <taxon>Metazoa</taxon>
        <taxon>Chordata</taxon>
        <taxon>Craniata</taxon>
        <taxon>Vertebrata</taxon>
        <taxon>Euteleostomi</taxon>
        <taxon>Amphibia</taxon>
        <taxon>Batrachia</taxon>
        <taxon>Anura</taxon>
        <taxon>Pipoidea</taxon>
        <taxon>Pipidae</taxon>
        <taxon>Xenopodinae</taxon>
        <taxon>Xenopus</taxon>
        <taxon>Silurana</taxon>
    </lineage>
</organism>
<name>NKAI4_XENTR</name>
<evidence type="ECO:0000250" key="1"/>
<evidence type="ECO:0000255" key="2"/>
<evidence type="ECO:0000305" key="3"/>